<feature type="chain" id="PRO_0000191529" description="Sperm protamine P1">
    <location>
        <begin position="1"/>
        <end position="62"/>
    </location>
</feature>
<feature type="region of interest" description="Disordered" evidence="1">
    <location>
        <begin position="1"/>
        <end position="62"/>
    </location>
</feature>
<sequence>MARYRRHSRSRSRSRYRRRRRRRSRGRRRRTYRRSRRHSRRRRGRRRGYSRRRYSRRGRRRY</sequence>
<accession>P67853</accession>
<accession>P42130</accession>
<accession>P42146</accession>
<reference key="1">
    <citation type="journal article" date="1995" name="Proc. R. Soc. B">
        <title>Molecular phylogeny and evolution of marsupial protamine P1 genes.</title>
        <authorList>
            <person name="Retief J.D."/>
            <person name="Krajewski C."/>
            <person name="Westerman M."/>
            <person name="Winkfein R.J."/>
            <person name="Dixon G.H."/>
        </authorList>
    </citation>
    <scope>NUCLEOTIDE SEQUENCE [GENOMIC DNA]</scope>
</reference>
<name>HSP1_PHADO</name>
<comment type="function">
    <text>Protamines substitute for histones in the chromatin of sperm during the haploid phase of spermatogenesis. They compact sperm DNA into a highly condensed, stable and inactive complex.</text>
</comment>
<comment type="subcellular location">
    <subcellularLocation>
        <location>Nucleus</location>
    </subcellularLocation>
    <subcellularLocation>
        <location>Chromosome</location>
    </subcellularLocation>
</comment>
<comment type="tissue specificity">
    <text>Testis.</text>
</comment>
<comment type="similarity">
    <text evidence="2">Belongs to the protamine P1 family.</text>
</comment>
<dbReference type="EMBL" id="L35339">
    <property type="protein sequence ID" value="AAA74601.1"/>
    <property type="molecule type" value="Genomic_DNA"/>
</dbReference>
<dbReference type="GO" id="GO:0000786">
    <property type="term" value="C:nucleosome"/>
    <property type="evidence" value="ECO:0007669"/>
    <property type="project" value="UniProtKB-KW"/>
</dbReference>
<dbReference type="GO" id="GO:0005634">
    <property type="term" value="C:nucleus"/>
    <property type="evidence" value="ECO:0007669"/>
    <property type="project" value="UniProtKB-SubCell"/>
</dbReference>
<dbReference type="GO" id="GO:0003677">
    <property type="term" value="F:DNA binding"/>
    <property type="evidence" value="ECO:0007669"/>
    <property type="project" value="UniProtKB-KW"/>
</dbReference>
<dbReference type="GO" id="GO:0030261">
    <property type="term" value="P:chromosome condensation"/>
    <property type="evidence" value="ECO:0007669"/>
    <property type="project" value="UniProtKB-KW"/>
</dbReference>
<dbReference type="GO" id="GO:0035092">
    <property type="term" value="P:sperm DNA condensation"/>
    <property type="evidence" value="ECO:0007669"/>
    <property type="project" value="InterPro"/>
</dbReference>
<dbReference type="InterPro" id="IPR000221">
    <property type="entry name" value="Protamine_P1"/>
</dbReference>
<dbReference type="PROSITE" id="PS00048">
    <property type="entry name" value="PROTAMINE_P1"/>
    <property type="match status" value="1"/>
</dbReference>
<protein>
    <recommendedName>
        <fullName>Sperm protamine P1</fullName>
    </recommendedName>
</protein>
<organism>
    <name type="scientific">Phascolosorex dorsalis</name>
    <name type="common">Narrow-striped dasyure</name>
    <dbReference type="NCBI Taxonomy" id="9295"/>
    <lineage>
        <taxon>Eukaryota</taxon>
        <taxon>Metazoa</taxon>
        <taxon>Chordata</taxon>
        <taxon>Craniata</taxon>
        <taxon>Vertebrata</taxon>
        <taxon>Euteleostomi</taxon>
        <taxon>Mammalia</taxon>
        <taxon>Metatheria</taxon>
        <taxon>Dasyuromorphia</taxon>
        <taxon>Dasyuridae</taxon>
        <taxon>Phascolosorex</taxon>
    </lineage>
</organism>
<gene>
    <name type="primary">PRM1</name>
</gene>
<keyword id="KW-0158">Chromosome</keyword>
<keyword id="KW-0217">Developmental protein</keyword>
<keyword id="KW-0221">Differentiation</keyword>
<keyword id="KW-0226">DNA condensation</keyword>
<keyword id="KW-0238">DNA-binding</keyword>
<keyword id="KW-0544">Nucleosome core</keyword>
<keyword id="KW-0539">Nucleus</keyword>
<keyword id="KW-0744">Spermatogenesis</keyword>
<evidence type="ECO:0000256" key="1">
    <source>
        <dbReference type="SAM" id="MobiDB-lite"/>
    </source>
</evidence>
<evidence type="ECO:0000305" key="2"/>
<proteinExistence type="evidence at transcript level"/>